<protein>
    <recommendedName>
        <fullName evidence="1">Formate-dependent phosphoribosylglycinamide formyltransferase</fullName>
        <ecNumber evidence="1">6.3.1.21</ecNumber>
    </recommendedName>
    <alternativeName>
        <fullName evidence="1">5'-phosphoribosylglycinamide transformylase 2</fullName>
    </alternativeName>
    <alternativeName>
        <fullName evidence="1">Formate-dependent GAR transformylase</fullName>
    </alternativeName>
    <alternativeName>
        <fullName evidence="1">GAR transformylase 2</fullName>
        <shortName evidence="1">GART 2</shortName>
    </alternativeName>
    <alternativeName>
        <fullName evidence="1">Non-folate glycinamide ribonucleotide transformylase</fullName>
    </alternativeName>
    <alternativeName>
        <fullName evidence="1">Phosphoribosylglycinamide formyltransferase 2</fullName>
    </alternativeName>
</protein>
<evidence type="ECO:0000255" key="1">
    <source>
        <dbReference type="HAMAP-Rule" id="MF_01643"/>
    </source>
</evidence>
<evidence type="ECO:0000305" key="2"/>
<gene>
    <name evidence="1" type="primary">purT</name>
    <name type="ordered locus">SSO0026</name>
</gene>
<organism>
    <name type="scientific">Saccharolobus solfataricus (strain ATCC 35092 / DSM 1617 / JCM 11322 / P2)</name>
    <name type="common">Sulfolobus solfataricus</name>
    <dbReference type="NCBI Taxonomy" id="273057"/>
    <lineage>
        <taxon>Archaea</taxon>
        <taxon>Thermoproteota</taxon>
        <taxon>Thermoprotei</taxon>
        <taxon>Sulfolobales</taxon>
        <taxon>Sulfolobaceae</taxon>
        <taxon>Saccharolobus</taxon>
    </lineage>
</organism>
<comment type="function">
    <text evidence="1">Involved in the de novo purine biosynthesis. Catalyzes the transfer of formate to 5-phospho-ribosyl-glycinamide (GAR), producing 5-phospho-ribosyl-N-formylglycinamide (FGAR). Formate is provided by PurU via hydrolysis of 10-formyl-tetrahydrofolate.</text>
</comment>
<comment type="catalytic activity">
    <reaction evidence="1">
        <text>N(1)-(5-phospho-beta-D-ribosyl)glycinamide + formate + ATP = N(2)-formyl-N(1)-(5-phospho-beta-D-ribosyl)glycinamide + ADP + phosphate + H(+)</text>
        <dbReference type="Rhea" id="RHEA:24829"/>
        <dbReference type="ChEBI" id="CHEBI:15378"/>
        <dbReference type="ChEBI" id="CHEBI:15740"/>
        <dbReference type="ChEBI" id="CHEBI:30616"/>
        <dbReference type="ChEBI" id="CHEBI:43474"/>
        <dbReference type="ChEBI" id="CHEBI:143788"/>
        <dbReference type="ChEBI" id="CHEBI:147286"/>
        <dbReference type="ChEBI" id="CHEBI:456216"/>
        <dbReference type="EC" id="6.3.1.21"/>
    </reaction>
    <physiologicalReaction direction="left-to-right" evidence="1">
        <dbReference type="Rhea" id="RHEA:24830"/>
    </physiologicalReaction>
</comment>
<comment type="pathway">
    <text evidence="1">Purine metabolism; IMP biosynthesis via de novo pathway; N(2)-formyl-N(1)-(5-phospho-D-ribosyl)glycinamide from N(1)-(5-phospho-D-ribosyl)glycinamide (formate route): step 1/1.</text>
</comment>
<comment type="subunit">
    <text evidence="1">Homodimer.</text>
</comment>
<comment type="similarity">
    <text evidence="1">Belongs to the PurK/PurT family.</text>
</comment>
<comment type="sequence caution" evidence="2">
    <conflict type="erroneous initiation">
        <sequence resource="EMBL-CDS" id="AAK40393"/>
    </conflict>
</comment>
<dbReference type="EC" id="6.3.1.21" evidence="1"/>
<dbReference type="EMBL" id="AE006641">
    <property type="protein sequence ID" value="AAK40393.1"/>
    <property type="status" value="ALT_INIT"/>
    <property type="molecule type" value="Genomic_DNA"/>
</dbReference>
<dbReference type="PIR" id="B90142">
    <property type="entry name" value="B90142"/>
</dbReference>
<dbReference type="RefSeq" id="WP_009989613.1">
    <property type="nucleotide sequence ID" value="NC_002754.1"/>
</dbReference>
<dbReference type="SMR" id="Q981B9"/>
<dbReference type="STRING" id="273057.SSO0026"/>
<dbReference type="PaxDb" id="273057-SSO0026"/>
<dbReference type="EnsemblBacteria" id="AAK40393">
    <property type="protein sequence ID" value="AAK40393"/>
    <property type="gene ID" value="SSO0026"/>
</dbReference>
<dbReference type="GeneID" id="44128989"/>
<dbReference type="KEGG" id="sso:SSO0026"/>
<dbReference type="PATRIC" id="fig|273057.12.peg.29"/>
<dbReference type="eggNOG" id="arCOG01598">
    <property type="taxonomic scope" value="Archaea"/>
</dbReference>
<dbReference type="HOGENOM" id="CLU_011534_1_3_2"/>
<dbReference type="InParanoid" id="Q981B9"/>
<dbReference type="UniPathway" id="UPA00074">
    <property type="reaction ID" value="UER00127"/>
</dbReference>
<dbReference type="Proteomes" id="UP000001974">
    <property type="component" value="Chromosome"/>
</dbReference>
<dbReference type="GO" id="GO:0005829">
    <property type="term" value="C:cytosol"/>
    <property type="evidence" value="ECO:0000318"/>
    <property type="project" value="GO_Central"/>
</dbReference>
<dbReference type="GO" id="GO:0005524">
    <property type="term" value="F:ATP binding"/>
    <property type="evidence" value="ECO:0007669"/>
    <property type="project" value="UniProtKB-UniRule"/>
</dbReference>
<dbReference type="GO" id="GO:0000287">
    <property type="term" value="F:magnesium ion binding"/>
    <property type="evidence" value="ECO:0007669"/>
    <property type="project" value="InterPro"/>
</dbReference>
<dbReference type="GO" id="GO:0043815">
    <property type="term" value="F:phosphoribosylglycinamide formyltransferase 2 activity"/>
    <property type="evidence" value="ECO:0007669"/>
    <property type="project" value="UniProtKB-UniRule"/>
</dbReference>
<dbReference type="GO" id="GO:0004644">
    <property type="term" value="F:phosphoribosylglycinamide formyltransferase activity"/>
    <property type="evidence" value="ECO:0007669"/>
    <property type="project" value="InterPro"/>
</dbReference>
<dbReference type="GO" id="GO:0006189">
    <property type="term" value="P:'de novo' IMP biosynthetic process"/>
    <property type="evidence" value="ECO:0007669"/>
    <property type="project" value="UniProtKB-UniRule"/>
</dbReference>
<dbReference type="FunFam" id="3.40.50.20:FF:000022">
    <property type="entry name" value="Formate-dependent phosphoribosylglycinamide formyltransferase"/>
    <property type="match status" value="1"/>
</dbReference>
<dbReference type="Gene3D" id="3.40.50.20">
    <property type="match status" value="1"/>
</dbReference>
<dbReference type="Gene3D" id="3.30.1490.20">
    <property type="entry name" value="ATP-grasp fold, A domain"/>
    <property type="match status" value="1"/>
</dbReference>
<dbReference type="Gene3D" id="3.30.470.20">
    <property type="entry name" value="ATP-grasp fold, B domain"/>
    <property type="match status" value="1"/>
</dbReference>
<dbReference type="HAMAP" id="MF_01643">
    <property type="entry name" value="PurT"/>
    <property type="match status" value="1"/>
</dbReference>
<dbReference type="InterPro" id="IPR011761">
    <property type="entry name" value="ATP-grasp"/>
</dbReference>
<dbReference type="InterPro" id="IPR003135">
    <property type="entry name" value="ATP-grasp_carboxylate-amine"/>
</dbReference>
<dbReference type="InterPro" id="IPR013815">
    <property type="entry name" value="ATP_grasp_subdomain_1"/>
</dbReference>
<dbReference type="InterPro" id="IPR016185">
    <property type="entry name" value="PreATP-grasp_dom_sf"/>
</dbReference>
<dbReference type="InterPro" id="IPR005862">
    <property type="entry name" value="PurT"/>
</dbReference>
<dbReference type="InterPro" id="IPR054350">
    <property type="entry name" value="PurT/PurK_preATP-grasp"/>
</dbReference>
<dbReference type="InterPro" id="IPR048740">
    <property type="entry name" value="PurT_C"/>
</dbReference>
<dbReference type="NCBIfam" id="NF006766">
    <property type="entry name" value="PRK09288.1"/>
    <property type="match status" value="1"/>
</dbReference>
<dbReference type="PANTHER" id="PTHR43055">
    <property type="entry name" value="FORMATE-DEPENDENT PHOSPHORIBOSYLGLYCINAMIDE FORMYLTRANSFERASE"/>
    <property type="match status" value="1"/>
</dbReference>
<dbReference type="PANTHER" id="PTHR43055:SF1">
    <property type="entry name" value="FORMATE-DEPENDENT PHOSPHORIBOSYLGLYCINAMIDE FORMYLTRANSFERASE"/>
    <property type="match status" value="1"/>
</dbReference>
<dbReference type="Pfam" id="PF02222">
    <property type="entry name" value="ATP-grasp"/>
    <property type="match status" value="1"/>
</dbReference>
<dbReference type="Pfam" id="PF21244">
    <property type="entry name" value="PurT_C"/>
    <property type="match status" value="1"/>
</dbReference>
<dbReference type="Pfam" id="PF22660">
    <property type="entry name" value="RS_preATP-grasp-like"/>
    <property type="match status" value="1"/>
</dbReference>
<dbReference type="SUPFAM" id="SSF56059">
    <property type="entry name" value="Glutathione synthetase ATP-binding domain-like"/>
    <property type="match status" value="1"/>
</dbReference>
<dbReference type="SUPFAM" id="SSF52440">
    <property type="entry name" value="PreATP-grasp domain"/>
    <property type="match status" value="1"/>
</dbReference>
<dbReference type="PROSITE" id="PS50975">
    <property type="entry name" value="ATP_GRASP"/>
    <property type="match status" value="1"/>
</dbReference>
<accession>Q981B9</accession>
<name>PURT_SACS2</name>
<reference key="1">
    <citation type="journal article" date="2001" name="Proc. Natl. Acad. Sci. U.S.A.">
        <title>The complete genome of the crenarchaeon Sulfolobus solfataricus P2.</title>
        <authorList>
            <person name="She Q."/>
            <person name="Singh R.K."/>
            <person name="Confalonieri F."/>
            <person name="Zivanovic Y."/>
            <person name="Allard G."/>
            <person name="Awayez M.J."/>
            <person name="Chan-Weiher C.C.-Y."/>
            <person name="Clausen I.G."/>
            <person name="Curtis B.A."/>
            <person name="De Moors A."/>
            <person name="Erauso G."/>
            <person name="Fletcher C."/>
            <person name="Gordon P.M.K."/>
            <person name="Heikamp-de Jong I."/>
            <person name="Jeffries A.C."/>
            <person name="Kozera C.J."/>
            <person name="Medina N."/>
            <person name="Peng X."/>
            <person name="Thi-Ngoc H.P."/>
            <person name="Redder P."/>
            <person name="Schenk M.E."/>
            <person name="Theriault C."/>
            <person name="Tolstrup N."/>
            <person name="Charlebois R.L."/>
            <person name="Doolittle W.F."/>
            <person name="Duguet M."/>
            <person name="Gaasterland T."/>
            <person name="Garrett R.A."/>
            <person name="Ragan M.A."/>
            <person name="Sensen C.W."/>
            <person name="Van der Oost J."/>
        </authorList>
    </citation>
    <scope>NUCLEOTIDE SEQUENCE [LARGE SCALE GENOMIC DNA]</scope>
    <source>
        <strain>ATCC 35092 / DSM 1617 / JCM 11322 / P2</strain>
    </source>
</reference>
<feature type="chain" id="PRO_0000319288" description="Formate-dependent phosphoribosylglycinamide formyltransferase">
    <location>
        <begin position="1"/>
        <end position="397"/>
    </location>
</feature>
<feature type="domain" description="ATP-grasp" evidence="1">
    <location>
        <begin position="118"/>
        <end position="312"/>
    </location>
</feature>
<feature type="binding site" evidence="1">
    <location>
        <begin position="21"/>
        <end position="22"/>
    </location>
    <ligand>
        <name>N(1)-(5-phospho-beta-D-ribosyl)glycinamide</name>
        <dbReference type="ChEBI" id="CHEBI:143788"/>
    </ligand>
</feature>
<feature type="binding site" evidence="1">
    <location>
        <position position="81"/>
    </location>
    <ligand>
        <name>N(1)-(5-phospho-beta-D-ribosyl)glycinamide</name>
        <dbReference type="ChEBI" id="CHEBI:143788"/>
    </ligand>
</feature>
<feature type="binding site" evidence="1">
    <location>
        <position position="113"/>
    </location>
    <ligand>
        <name>ATP</name>
        <dbReference type="ChEBI" id="CHEBI:30616"/>
    </ligand>
</feature>
<feature type="binding site" evidence="1">
    <location>
        <position position="154"/>
    </location>
    <ligand>
        <name>ATP</name>
        <dbReference type="ChEBI" id="CHEBI:30616"/>
    </ligand>
</feature>
<feature type="binding site" evidence="1">
    <location>
        <begin position="194"/>
        <end position="197"/>
    </location>
    <ligand>
        <name>ATP</name>
        <dbReference type="ChEBI" id="CHEBI:30616"/>
    </ligand>
</feature>
<feature type="binding site" evidence="1">
    <location>
        <position position="202"/>
    </location>
    <ligand>
        <name>ATP</name>
        <dbReference type="ChEBI" id="CHEBI:30616"/>
    </ligand>
</feature>
<feature type="binding site" evidence="1">
    <location>
        <position position="271"/>
    </location>
    <ligand>
        <name>Mg(2+)</name>
        <dbReference type="ChEBI" id="CHEBI:18420"/>
    </ligand>
</feature>
<feature type="binding site" evidence="1">
    <location>
        <position position="283"/>
    </location>
    <ligand>
        <name>Mg(2+)</name>
        <dbReference type="ChEBI" id="CHEBI:18420"/>
    </ligand>
</feature>
<feature type="binding site" evidence="1">
    <location>
        <position position="290"/>
    </location>
    <ligand>
        <name>N(1)-(5-phospho-beta-D-ribosyl)glycinamide</name>
        <dbReference type="ChEBI" id="CHEBI:143788"/>
    </ligand>
</feature>
<feature type="binding site" evidence="1">
    <location>
        <position position="361"/>
    </location>
    <ligand>
        <name>N(1)-(5-phospho-beta-D-ribosyl)glycinamide</name>
        <dbReference type="ChEBI" id="CHEBI:143788"/>
    </ligand>
</feature>
<feature type="binding site" evidence="1">
    <location>
        <begin position="368"/>
        <end position="369"/>
    </location>
    <ligand>
        <name>N(1)-(5-phospho-beta-D-ribosyl)glycinamide</name>
        <dbReference type="ChEBI" id="CHEBI:143788"/>
    </ligand>
</feature>
<proteinExistence type="inferred from homology"/>
<sequence length="397" mass="44043">MEIGTPLFEGSKKILLLGSGELGKEMAIEAQRMGLEVVALDRYDLAPAMHVAHRKYVVDMMNPNAIKAVVKRERPDAIIAEIEAINTDALIELESNGFRVVPNANAVKACMNRIELRRFAAEKLKLPTTKYAFAENEEEVKRACKDIGFPCLIKPEMSSSGHGHVLVNKIENVEEAYRESISHARGKSRRVIVEEFVKIDTELTVLTYRYHSNSDSIITKTIEPIEHKRPSYYYVESWHPSNVSQGVKETARGIAQKVAEELGGLGIYGVEIIVSGNRILFSEVAPRPHDTGLVTLASSDINEFQIHVRSAIGLPTPEVKLVSPAASHVILAQTENVWGPKFLNIEKAMEIPGVQVRLFGKPVTYEKRRMGVVLATGNSVEEALEKVRKASSIILVK</sequence>
<keyword id="KW-0067">ATP-binding</keyword>
<keyword id="KW-0436">Ligase</keyword>
<keyword id="KW-0460">Magnesium</keyword>
<keyword id="KW-0479">Metal-binding</keyword>
<keyword id="KW-0547">Nucleotide-binding</keyword>
<keyword id="KW-0658">Purine biosynthesis</keyword>
<keyword id="KW-1185">Reference proteome</keyword>